<name>PVK3_SUPLO</name>
<dbReference type="GO" id="GO:0005576">
    <property type="term" value="C:extracellular region"/>
    <property type="evidence" value="ECO:0007669"/>
    <property type="project" value="UniProtKB-SubCell"/>
</dbReference>
<dbReference type="GO" id="GO:0007218">
    <property type="term" value="P:neuropeptide signaling pathway"/>
    <property type="evidence" value="ECO:0007669"/>
    <property type="project" value="UniProtKB-KW"/>
</dbReference>
<dbReference type="InterPro" id="IPR013231">
    <property type="entry name" value="Periviscerokinin"/>
</dbReference>
<dbReference type="Pfam" id="PF08259">
    <property type="entry name" value="Periviscerokin"/>
    <property type="match status" value="1"/>
</dbReference>
<evidence type="ECO:0000255" key="1"/>
<evidence type="ECO:0000269" key="2">
    <source>
    </source>
</evidence>
<evidence type="ECO:0000303" key="3">
    <source>
    </source>
</evidence>
<evidence type="ECO:0000305" key="4"/>
<feature type="peptide" id="PRO_0000378855" description="Periviscerokinin-3" evidence="2">
    <location>
        <begin position="1"/>
        <end position="11"/>
    </location>
</feature>
<feature type="modified residue" description="Valine amide" evidence="2">
    <location>
        <position position="11"/>
    </location>
</feature>
<accession>P85780</accession>
<proteinExistence type="evidence at protein level"/>
<keyword id="KW-0027">Amidation</keyword>
<keyword id="KW-0903">Direct protein sequencing</keyword>
<keyword id="KW-0527">Neuropeptide</keyword>
<keyword id="KW-0964">Secreted</keyword>
<sequence>GSSGMIPFPRV</sequence>
<reference evidence="4" key="1">
    <citation type="journal article" date="2009" name="BMC Evol. Biol.">
        <title>A proteomic approach for studying insect phylogeny: CAPA peptides of ancient insect taxa (Dictyoptera, Blattoptera) as a test case.</title>
        <authorList>
            <person name="Roth S."/>
            <person name="Fromm B."/>
            <person name="Gaede G."/>
            <person name="Predel R."/>
        </authorList>
    </citation>
    <scope>PROTEIN SEQUENCE</scope>
    <scope>AMIDATION AT VAL-11</scope>
    <source>
        <tissue evidence="2">Abdominal perisympathetic organs</tissue>
    </source>
</reference>
<protein>
    <recommendedName>
        <fullName evidence="3">Periviscerokinin-3</fullName>
        <shortName evidence="3">SupLo-PVK-3</shortName>
    </recommendedName>
</protein>
<comment type="function">
    <text evidence="4">Mediates visceral muscle contractile activity (myotropic activity).</text>
</comment>
<comment type="subcellular location">
    <subcellularLocation>
        <location evidence="4">Secreted</location>
    </subcellularLocation>
</comment>
<comment type="similarity">
    <text evidence="1">Belongs to the periviscerokinin family.</text>
</comment>
<organism>
    <name type="scientific">Supella longipalpa</name>
    <name type="common">Brown-banded cockroach</name>
    <dbReference type="NCBI Taxonomy" id="83902"/>
    <lineage>
        <taxon>Eukaryota</taxon>
        <taxon>Metazoa</taxon>
        <taxon>Ecdysozoa</taxon>
        <taxon>Arthropoda</taxon>
        <taxon>Hexapoda</taxon>
        <taxon>Insecta</taxon>
        <taxon>Pterygota</taxon>
        <taxon>Neoptera</taxon>
        <taxon>Polyneoptera</taxon>
        <taxon>Dictyoptera</taxon>
        <taxon>Blattodea</taxon>
        <taxon>Blaberoidea</taxon>
        <taxon>Ectobiidae</taxon>
        <taxon>Plectopterinae</taxon>
        <taxon>Supella</taxon>
    </lineage>
</organism>